<protein>
    <recommendedName>
        <fullName evidence="1">3-dehydroquinate dehydratase</fullName>
        <shortName evidence="1">3-dehydroquinase</shortName>
        <ecNumber evidence="1">4.2.1.10</ecNumber>
    </recommendedName>
    <alternativeName>
        <fullName evidence="1">Type I DHQase</fullName>
    </alternativeName>
    <alternativeName>
        <fullName evidence="1">Type I dehydroquinase</fullName>
        <shortName evidence="1">DHQ1</shortName>
    </alternativeName>
</protein>
<comment type="function">
    <text evidence="1">Involved in the third step of the chorismate pathway, which leads to the biosynthesis of aromatic amino acids. Catalyzes the cis-dehydration of 3-dehydroquinate (DHQ) and introduces the first double bond of the aromatic ring to yield 3-dehydroshikimate.</text>
</comment>
<comment type="catalytic activity">
    <reaction evidence="1">
        <text>3-dehydroquinate = 3-dehydroshikimate + H2O</text>
        <dbReference type="Rhea" id="RHEA:21096"/>
        <dbReference type="ChEBI" id="CHEBI:15377"/>
        <dbReference type="ChEBI" id="CHEBI:16630"/>
        <dbReference type="ChEBI" id="CHEBI:32364"/>
        <dbReference type="EC" id="4.2.1.10"/>
    </reaction>
</comment>
<comment type="pathway">
    <text evidence="1">Metabolic intermediate biosynthesis; chorismate biosynthesis; chorismate from D-erythrose 4-phosphate and phosphoenolpyruvate: step 3/7.</text>
</comment>
<comment type="subunit">
    <text evidence="1">Homodimer.</text>
</comment>
<comment type="similarity">
    <text evidence="1">Belongs to the type-I 3-dehydroquinase family.</text>
</comment>
<evidence type="ECO:0000255" key="1">
    <source>
        <dbReference type="HAMAP-Rule" id="MF_00214"/>
    </source>
</evidence>
<dbReference type="EC" id="4.2.1.10" evidence="1"/>
<dbReference type="EMBL" id="CP000259">
    <property type="protein sequence ID" value="ABF31867.1"/>
    <property type="molecule type" value="Genomic_DNA"/>
</dbReference>
<dbReference type="RefSeq" id="WP_002985140.1">
    <property type="nucleotide sequence ID" value="NC_008021.1"/>
</dbReference>
<dbReference type="SMR" id="Q1JME5"/>
<dbReference type="GeneID" id="69901072"/>
<dbReference type="KEGG" id="spk:MGAS9429_Spy0679"/>
<dbReference type="HOGENOM" id="CLU_064444_0_0_9"/>
<dbReference type="UniPathway" id="UPA00053">
    <property type="reaction ID" value="UER00086"/>
</dbReference>
<dbReference type="Proteomes" id="UP000002433">
    <property type="component" value="Chromosome"/>
</dbReference>
<dbReference type="GO" id="GO:0003855">
    <property type="term" value="F:3-dehydroquinate dehydratase activity"/>
    <property type="evidence" value="ECO:0007669"/>
    <property type="project" value="UniProtKB-UniRule"/>
</dbReference>
<dbReference type="GO" id="GO:0046279">
    <property type="term" value="P:3,4-dihydroxybenzoate biosynthetic process"/>
    <property type="evidence" value="ECO:0007669"/>
    <property type="project" value="TreeGrafter"/>
</dbReference>
<dbReference type="GO" id="GO:0008652">
    <property type="term" value="P:amino acid biosynthetic process"/>
    <property type="evidence" value="ECO:0007669"/>
    <property type="project" value="UniProtKB-KW"/>
</dbReference>
<dbReference type="GO" id="GO:0009073">
    <property type="term" value="P:aromatic amino acid family biosynthetic process"/>
    <property type="evidence" value="ECO:0007669"/>
    <property type="project" value="UniProtKB-KW"/>
</dbReference>
<dbReference type="GO" id="GO:0009423">
    <property type="term" value="P:chorismate biosynthetic process"/>
    <property type="evidence" value="ECO:0007669"/>
    <property type="project" value="UniProtKB-UniRule"/>
</dbReference>
<dbReference type="CDD" id="cd00502">
    <property type="entry name" value="DHQase_I"/>
    <property type="match status" value="1"/>
</dbReference>
<dbReference type="Gene3D" id="3.20.20.70">
    <property type="entry name" value="Aldolase class I"/>
    <property type="match status" value="1"/>
</dbReference>
<dbReference type="HAMAP" id="MF_00214">
    <property type="entry name" value="AroD"/>
    <property type="match status" value="1"/>
</dbReference>
<dbReference type="InterPro" id="IPR013785">
    <property type="entry name" value="Aldolase_TIM"/>
</dbReference>
<dbReference type="InterPro" id="IPR001381">
    <property type="entry name" value="DHquinase_I"/>
</dbReference>
<dbReference type="InterPro" id="IPR050146">
    <property type="entry name" value="Type-I_3-dehydroquinase"/>
</dbReference>
<dbReference type="NCBIfam" id="TIGR01093">
    <property type="entry name" value="aroD"/>
    <property type="match status" value="1"/>
</dbReference>
<dbReference type="PANTHER" id="PTHR43699">
    <property type="entry name" value="3-DEHYDROQUINATE DEHYDRATASE"/>
    <property type="match status" value="1"/>
</dbReference>
<dbReference type="PANTHER" id="PTHR43699:SF1">
    <property type="entry name" value="3-DEHYDROQUINATE DEHYDRATASE"/>
    <property type="match status" value="1"/>
</dbReference>
<dbReference type="Pfam" id="PF01487">
    <property type="entry name" value="DHquinase_I"/>
    <property type="match status" value="1"/>
</dbReference>
<dbReference type="SUPFAM" id="SSF51569">
    <property type="entry name" value="Aldolase"/>
    <property type="match status" value="1"/>
</dbReference>
<gene>
    <name evidence="1" type="primary">aroD</name>
    <name type="ordered locus">MGAS9429_Spy0679</name>
</gene>
<proteinExistence type="inferred from homology"/>
<sequence>MRIVAPVMPRHFDEAQAIDISKYEDVNLIEWRADFLPKDEIVAVAPAIFEKFAGKEIIFTLRTVQEGGNITLSSQEYVDIIKEINAIYNPDYIDFEYFTHKSVFQEMLDFPNLILSYHNFEETPENLMEAFSEMTKLAPRVVKIAVMPQSEQDVLDLMNYTRGFKTLNPEQEFATISMGKLGRLSRFAGDVIGSSWTYVSLDHVSGPGQVTLNDMKRIIEVLEMDISN</sequence>
<name>AROD_STRPC</name>
<keyword id="KW-0028">Amino-acid biosynthesis</keyword>
<keyword id="KW-0057">Aromatic amino acid biosynthesis</keyword>
<keyword id="KW-0456">Lyase</keyword>
<keyword id="KW-0704">Schiff base</keyword>
<feature type="chain" id="PRO_1000043197" description="3-dehydroquinate dehydratase">
    <location>
        <begin position="1"/>
        <end position="228"/>
    </location>
</feature>
<feature type="active site" description="Proton donor/acceptor" evidence="1">
    <location>
        <position position="118"/>
    </location>
</feature>
<feature type="active site" description="Schiff-base intermediate with substrate" evidence="1">
    <location>
        <position position="143"/>
    </location>
</feature>
<feature type="binding site" evidence="1">
    <location>
        <begin position="30"/>
        <end position="32"/>
    </location>
    <ligand>
        <name>3-dehydroquinate</name>
        <dbReference type="ChEBI" id="CHEBI:32364"/>
    </ligand>
</feature>
<feature type="binding site" evidence="1">
    <location>
        <position position="62"/>
    </location>
    <ligand>
        <name>3-dehydroquinate</name>
        <dbReference type="ChEBI" id="CHEBI:32364"/>
    </ligand>
</feature>
<feature type="binding site" evidence="1">
    <location>
        <position position="186"/>
    </location>
    <ligand>
        <name>3-dehydroquinate</name>
        <dbReference type="ChEBI" id="CHEBI:32364"/>
    </ligand>
</feature>
<feature type="binding site" evidence="1">
    <location>
        <position position="205"/>
    </location>
    <ligand>
        <name>3-dehydroquinate</name>
        <dbReference type="ChEBI" id="CHEBI:32364"/>
    </ligand>
</feature>
<feature type="binding site" evidence="1">
    <location>
        <position position="209"/>
    </location>
    <ligand>
        <name>3-dehydroquinate</name>
        <dbReference type="ChEBI" id="CHEBI:32364"/>
    </ligand>
</feature>
<reference key="1">
    <citation type="journal article" date="2006" name="Proc. Natl. Acad. Sci. U.S.A.">
        <title>Molecular genetic anatomy of inter- and intraserotype variation in the human bacterial pathogen group A Streptococcus.</title>
        <authorList>
            <person name="Beres S.B."/>
            <person name="Richter E.W."/>
            <person name="Nagiec M.J."/>
            <person name="Sumby P."/>
            <person name="Porcella S.F."/>
            <person name="DeLeo F.R."/>
            <person name="Musser J.M."/>
        </authorList>
    </citation>
    <scope>NUCLEOTIDE SEQUENCE [LARGE SCALE GENOMIC DNA]</scope>
    <source>
        <strain>MGAS9429</strain>
    </source>
</reference>
<accession>Q1JME5</accession>
<organism>
    <name type="scientific">Streptococcus pyogenes serotype M12 (strain MGAS9429)</name>
    <dbReference type="NCBI Taxonomy" id="370551"/>
    <lineage>
        <taxon>Bacteria</taxon>
        <taxon>Bacillati</taxon>
        <taxon>Bacillota</taxon>
        <taxon>Bacilli</taxon>
        <taxon>Lactobacillales</taxon>
        <taxon>Streptococcaceae</taxon>
        <taxon>Streptococcus</taxon>
    </lineage>
</organism>